<name>MALX_KLEPN</name>
<protein>
    <recommendedName>
        <fullName>Protein MalX</fullName>
    </recommendedName>
</protein>
<feature type="chain" id="PRO_0000084561" description="Protein MalX">
    <location>
        <begin position="1"/>
        <end position="65" status="greater than"/>
    </location>
</feature>
<feature type="non-terminal residue">
    <location>
        <position position="65"/>
    </location>
</feature>
<organism>
    <name type="scientific">Klebsiella pneumoniae</name>
    <dbReference type="NCBI Taxonomy" id="573"/>
    <lineage>
        <taxon>Bacteria</taxon>
        <taxon>Pseudomonadati</taxon>
        <taxon>Pseudomonadota</taxon>
        <taxon>Gammaproteobacteria</taxon>
        <taxon>Enterobacterales</taxon>
        <taxon>Enterobacteriaceae</taxon>
        <taxon>Klebsiella/Raoultella group</taxon>
        <taxon>Klebsiella</taxon>
        <taxon>Klebsiella pneumoniae complex</taxon>
    </lineage>
</organism>
<proteinExistence type="predicted"/>
<sequence length="65" mass="7423">MSNGIKRYISVMQLTLINKKHMHYAPHIAMLVTLLLIGQQLAKLSWRMILPAYSPAIEMNDATEI</sequence>
<accession>P29852</accession>
<gene>
    <name type="primary">malX</name>
</gene>
<dbReference type="EMBL" id="M12503">
    <property type="protein sequence ID" value="AAA25088.1"/>
    <property type="molecule type" value="Genomic_DNA"/>
</dbReference>
<dbReference type="PIR" id="B25025">
    <property type="entry name" value="B25025"/>
</dbReference>
<keyword id="KW-0119">Carbohydrate metabolism</keyword>
<reference key="1">
    <citation type="journal article" date="1985" name="J. Bacteriol.">
        <title>Structure of two divergent promoters located in front of the gene encoding pullulanase in Klebsiella pneumoniae and positively regulated by the malT product.</title>
        <authorList>
            <person name="Chapon C."/>
            <person name="Raibaud O."/>
        </authorList>
    </citation>
    <scope>NUCLEOTIDE SEQUENCE [GENOMIC DNA]</scope>
</reference>